<protein>
    <recommendedName>
        <fullName>Nucleoside diphosphate kinase A1</fullName>
        <shortName>NDK A1</shortName>
        <shortName>NDP kinase A1</shortName>
        <ecNumber>2.7.4.6</ecNumber>
    </recommendedName>
    <alternativeName>
        <fullName>NM23/nucleoside diphosphate kinase A1</fullName>
    </alternativeName>
</protein>
<dbReference type="EC" id="2.7.4.6"/>
<dbReference type="EMBL" id="X97900">
    <property type="protein sequence ID" value="CAA66474.1"/>
    <property type="molecule type" value="mRNA"/>
</dbReference>
<dbReference type="EMBL" id="BC079795">
    <property type="protein sequence ID" value="AAH79795.1"/>
    <property type="molecule type" value="mRNA"/>
</dbReference>
<dbReference type="RefSeq" id="XP_018095479.1">
    <property type="nucleotide sequence ID" value="XM_018239990.2"/>
</dbReference>
<dbReference type="RefSeq" id="XP_018095480.1">
    <property type="nucleotide sequence ID" value="XM_018239991.2"/>
</dbReference>
<dbReference type="RefSeq" id="XP_018095481.1">
    <property type="nucleotide sequence ID" value="XM_018239992.2"/>
</dbReference>
<dbReference type="SMR" id="P70010"/>
<dbReference type="DNASU" id="394350"/>
<dbReference type="GeneID" id="394350"/>
<dbReference type="AGR" id="Xenbase:XB-GENE-923251"/>
<dbReference type="CTD" id="394350"/>
<dbReference type="Xenbase" id="XB-GENE-923251">
    <property type="gene designation" value="nme2.L"/>
</dbReference>
<dbReference type="OrthoDB" id="2162449at2759"/>
<dbReference type="Proteomes" id="UP000186698">
    <property type="component" value="Chromosome 9_10L"/>
</dbReference>
<dbReference type="Bgee" id="394350">
    <property type="expression patterns" value="Expressed in oocyte and 19 other cell types or tissues"/>
</dbReference>
<dbReference type="GO" id="GO:0005737">
    <property type="term" value="C:cytoplasm"/>
    <property type="evidence" value="ECO:0007669"/>
    <property type="project" value="UniProtKB-SubCell"/>
</dbReference>
<dbReference type="GO" id="GO:0005524">
    <property type="term" value="F:ATP binding"/>
    <property type="evidence" value="ECO:0007669"/>
    <property type="project" value="UniProtKB-KW"/>
</dbReference>
<dbReference type="GO" id="GO:0046872">
    <property type="term" value="F:metal ion binding"/>
    <property type="evidence" value="ECO:0007669"/>
    <property type="project" value="UniProtKB-KW"/>
</dbReference>
<dbReference type="GO" id="GO:0004550">
    <property type="term" value="F:nucleoside diphosphate kinase activity"/>
    <property type="evidence" value="ECO:0007669"/>
    <property type="project" value="UniProtKB-EC"/>
</dbReference>
<dbReference type="GO" id="GO:0006241">
    <property type="term" value="P:CTP biosynthetic process"/>
    <property type="evidence" value="ECO:0007669"/>
    <property type="project" value="InterPro"/>
</dbReference>
<dbReference type="GO" id="GO:0006183">
    <property type="term" value="P:GTP biosynthetic process"/>
    <property type="evidence" value="ECO:0007669"/>
    <property type="project" value="InterPro"/>
</dbReference>
<dbReference type="GO" id="GO:0042981">
    <property type="term" value="P:regulation of apoptotic process"/>
    <property type="evidence" value="ECO:0000318"/>
    <property type="project" value="GO_Central"/>
</dbReference>
<dbReference type="GO" id="GO:0006228">
    <property type="term" value="P:UTP biosynthetic process"/>
    <property type="evidence" value="ECO:0007669"/>
    <property type="project" value="InterPro"/>
</dbReference>
<dbReference type="CDD" id="cd04413">
    <property type="entry name" value="NDPk_I"/>
    <property type="match status" value="1"/>
</dbReference>
<dbReference type="FunFam" id="3.30.70.141:FF:000039">
    <property type="entry name" value="Nucleoside diphosphate kinase B"/>
    <property type="match status" value="1"/>
</dbReference>
<dbReference type="Gene3D" id="3.30.70.141">
    <property type="entry name" value="Nucleoside diphosphate kinase-like domain"/>
    <property type="match status" value="1"/>
</dbReference>
<dbReference type="HAMAP" id="MF_00451">
    <property type="entry name" value="NDP_kinase"/>
    <property type="match status" value="1"/>
</dbReference>
<dbReference type="InterPro" id="IPR034907">
    <property type="entry name" value="NDK-like_dom"/>
</dbReference>
<dbReference type="InterPro" id="IPR036850">
    <property type="entry name" value="NDK-like_dom_sf"/>
</dbReference>
<dbReference type="InterPro" id="IPR001564">
    <property type="entry name" value="Nucleoside_diP_kinase"/>
</dbReference>
<dbReference type="InterPro" id="IPR023005">
    <property type="entry name" value="Nucleoside_diP_kinase_AS"/>
</dbReference>
<dbReference type="NCBIfam" id="NF001908">
    <property type="entry name" value="PRK00668.1"/>
    <property type="match status" value="1"/>
</dbReference>
<dbReference type="PANTHER" id="PTHR11349">
    <property type="entry name" value="NUCLEOSIDE DIPHOSPHATE KINASE"/>
    <property type="match status" value="1"/>
</dbReference>
<dbReference type="Pfam" id="PF00334">
    <property type="entry name" value="NDK"/>
    <property type="match status" value="1"/>
</dbReference>
<dbReference type="PRINTS" id="PR01243">
    <property type="entry name" value="NUCDPKINASE"/>
</dbReference>
<dbReference type="SMART" id="SM00562">
    <property type="entry name" value="NDK"/>
    <property type="match status" value="1"/>
</dbReference>
<dbReference type="SUPFAM" id="SSF54919">
    <property type="entry name" value="Nucleoside diphosphate kinase, NDK"/>
    <property type="match status" value="1"/>
</dbReference>
<dbReference type="PROSITE" id="PS00469">
    <property type="entry name" value="NDPK"/>
    <property type="match status" value="1"/>
</dbReference>
<dbReference type="PROSITE" id="PS51374">
    <property type="entry name" value="NDPK_LIKE"/>
    <property type="match status" value="1"/>
</dbReference>
<proteinExistence type="evidence at transcript level"/>
<feature type="chain" id="PRO_0000137120" description="Nucleoside diphosphate kinase A1">
    <location>
        <begin position="1"/>
        <end position="154"/>
    </location>
</feature>
<feature type="active site" description="Pros-phosphohistidine intermediate" evidence="1">
    <location>
        <position position="119"/>
    </location>
</feature>
<feature type="binding site" evidence="1">
    <location>
        <position position="13"/>
    </location>
    <ligand>
        <name>ATP</name>
        <dbReference type="ChEBI" id="CHEBI:30616"/>
    </ligand>
</feature>
<feature type="binding site" evidence="1">
    <location>
        <position position="61"/>
    </location>
    <ligand>
        <name>ATP</name>
        <dbReference type="ChEBI" id="CHEBI:30616"/>
    </ligand>
</feature>
<feature type="binding site" evidence="1">
    <location>
        <position position="89"/>
    </location>
    <ligand>
        <name>ATP</name>
        <dbReference type="ChEBI" id="CHEBI:30616"/>
    </ligand>
</feature>
<feature type="binding site" evidence="1">
    <location>
        <position position="95"/>
    </location>
    <ligand>
        <name>ATP</name>
        <dbReference type="ChEBI" id="CHEBI:30616"/>
    </ligand>
</feature>
<feature type="binding site" evidence="1">
    <location>
        <position position="106"/>
    </location>
    <ligand>
        <name>ATP</name>
        <dbReference type="ChEBI" id="CHEBI:30616"/>
    </ligand>
</feature>
<feature type="binding site" evidence="1">
    <location>
        <position position="116"/>
    </location>
    <ligand>
        <name>ATP</name>
        <dbReference type="ChEBI" id="CHEBI:30616"/>
    </ligand>
</feature>
<evidence type="ECO:0000250" key="1"/>
<evidence type="ECO:0000305" key="2"/>
<organism>
    <name type="scientific">Xenopus laevis</name>
    <name type="common">African clawed frog</name>
    <dbReference type="NCBI Taxonomy" id="8355"/>
    <lineage>
        <taxon>Eukaryota</taxon>
        <taxon>Metazoa</taxon>
        <taxon>Chordata</taxon>
        <taxon>Craniata</taxon>
        <taxon>Vertebrata</taxon>
        <taxon>Euteleostomi</taxon>
        <taxon>Amphibia</taxon>
        <taxon>Batrachia</taxon>
        <taxon>Anura</taxon>
        <taxon>Pipoidea</taxon>
        <taxon>Pipidae</taxon>
        <taxon>Xenopodinae</taxon>
        <taxon>Xenopus</taxon>
        <taxon>Xenopus</taxon>
    </lineage>
</organism>
<sequence length="154" mass="17489">MAANKERTFIAIKPDGVQRGLMGDIIKRFEQKGFRLVAMKFQQASQDLLRQHYIDLKDRPFYPGLVEYMSSGPVLAMVWEGLNVVKTGRVMLGETNPADSKPGTIRGDFCIQVGRNIIHGSDSVESANKEIALWFKDEELVENKSCAYEWVYEN</sequence>
<accession>P70010</accession>
<accession>Q68FI7</accession>
<name>NDKA1_XENLA</name>
<comment type="function">
    <text>Major role in the synthesis of nucleoside triphosphates other than ATP. The ATP gamma phosphate is transferred to the NDP beta phosphate via a ping-pong mechanism, using a phosphorylated active-site intermediate.</text>
</comment>
<comment type="catalytic activity">
    <reaction>
        <text>a 2'-deoxyribonucleoside 5'-diphosphate + ATP = a 2'-deoxyribonucleoside 5'-triphosphate + ADP</text>
        <dbReference type="Rhea" id="RHEA:44640"/>
        <dbReference type="ChEBI" id="CHEBI:30616"/>
        <dbReference type="ChEBI" id="CHEBI:61560"/>
        <dbReference type="ChEBI" id="CHEBI:73316"/>
        <dbReference type="ChEBI" id="CHEBI:456216"/>
        <dbReference type="EC" id="2.7.4.6"/>
    </reaction>
</comment>
<comment type="catalytic activity">
    <reaction>
        <text>a ribonucleoside 5'-diphosphate + ATP = a ribonucleoside 5'-triphosphate + ADP</text>
        <dbReference type="Rhea" id="RHEA:18113"/>
        <dbReference type="ChEBI" id="CHEBI:30616"/>
        <dbReference type="ChEBI" id="CHEBI:57930"/>
        <dbReference type="ChEBI" id="CHEBI:61557"/>
        <dbReference type="ChEBI" id="CHEBI:456216"/>
        <dbReference type="EC" id="2.7.4.6"/>
    </reaction>
</comment>
<comment type="cofactor">
    <cofactor evidence="1">
        <name>Mg(2+)</name>
        <dbReference type="ChEBI" id="CHEBI:18420"/>
    </cofactor>
</comment>
<comment type="subcellular location">
    <subcellularLocation>
        <location evidence="1">Cytoplasm</location>
    </subcellularLocation>
</comment>
<comment type="similarity">
    <text evidence="2">Belongs to the NDK family.</text>
</comment>
<keyword id="KW-0067">ATP-binding</keyword>
<keyword id="KW-0963">Cytoplasm</keyword>
<keyword id="KW-0418">Kinase</keyword>
<keyword id="KW-0460">Magnesium</keyword>
<keyword id="KW-0479">Metal-binding</keyword>
<keyword id="KW-0546">Nucleotide metabolism</keyword>
<keyword id="KW-0547">Nucleotide-binding</keyword>
<keyword id="KW-0597">Phosphoprotein</keyword>
<keyword id="KW-1185">Reference proteome</keyword>
<keyword id="KW-0808">Transferase</keyword>
<reference key="1">
    <citation type="submission" date="1996-05" db="EMBL/GenBank/DDBJ databases">
        <title>Several genes encode the metastasis suppressor NM23/nucleoside diphosphate kinase of Xenopus laevis.</title>
        <authorList>
            <person name="Ouatas T."/>
            <person name="Abdallah B."/>
            <person name="Gasmi L."/>
            <person name="Mazabraud A."/>
        </authorList>
    </citation>
    <scope>NUCLEOTIDE SEQUENCE [MRNA]</scope>
    <source>
        <tissue>Ovary</tissue>
    </source>
</reference>
<reference key="2">
    <citation type="submission" date="2004-08" db="EMBL/GenBank/DDBJ databases">
        <authorList>
            <consortium name="NIH - Xenopus Gene Collection (XGC) project"/>
        </authorList>
    </citation>
    <scope>NUCLEOTIDE SEQUENCE [LARGE SCALE MRNA]</scope>
    <source>
        <tissue>Kidney</tissue>
    </source>
</reference>